<proteinExistence type="inferred from homology"/>
<feature type="chain" id="PRO_0000427179" description="Glucose-6-phosphate isomerase">
    <location>
        <begin position="1"/>
        <end position="553"/>
    </location>
</feature>
<feature type="region of interest" description="Disordered" evidence="2">
    <location>
        <begin position="524"/>
        <end position="553"/>
    </location>
</feature>
<feature type="compositionally biased region" description="Basic and acidic residues" evidence="2">
    <location>
        <begin position="541"/>
        <end position="553"/>
    </location>
</feature>
<feature type="active site" description="Proton donor" evidence="1">
    <location>
        <position position="357"/>
    </location>
</feature>
<feature type="active site" evidence="1">
    <location>
        <position position="388"/>
    </location>
</feature>
<feature type="active site" evidence="1">
    <location>
        <position position="514"/>
    </location>
</feature>
<sequence length="553" mass="59974">MTSAPIPDITATPAWDALRRHHDQIGNTHLRQFFADDPGRGRELTVSVGDLYIDYSKHRVTRETLALLIDLARTAHLEERRDQMFAGVHINTSEDRAVLHTALRLPRDAELVVDGQDVVTDVHAVLDAMGAFTDRLRSGEWTGATGKRISTVVNIGIGGSDLGPVMVYQALRHYADAGISARFVSNVDPADLIATLADLDPATTLFIVASKTFSTLETLTNATAARRWLTDALGDAAVSRHFVAVSTNKRLVDDFGINTDNMFGFWDWVGGRYSVDSAIGLSLMTVIGRDAFADFLAGFHIIDRHFATAPLESNAPVLLGLIGLWYSNFFGAQSRTVLPYSNDLSRFPAYLQQLTMESNGKSTRADGSPVSADTGEIFWGEPGTNGQHAFYQLLHQGTRLVPADFIGFAQPLDDLPTAEGTGSMHDLLMSNFFAQTQVLAFGKTAEEIAADGTPAHVVAHKVMPGNRPSTSILASRLTPSVLGQLIALYEHQVFTEGVVWGIDSFDQWGVELGKTQAKALLPVITGAGSPPPQSDSSTDGLVRRYRTERGRAG</sequence>
<dbReference type="EC" id="5.3.1.9" evidence="1"/>
<dbReference type="EMBL" id="AE000516">
    <property type="protein sequence ID" value="AAK45220.1"/>
    <property type="molecule type" value="Genomic_DNA"/>
</dbReference>
<dbReference type="PIR" id="H70715">
    <property type="entry name" value="H70715"/>
</dbReference>
<dbReference type="RefSeq" id="WP_003404830.1">
    <property type="nucleotide sequence ID" value="NZ_KK341227.1"/>
</dbReference>
<dbReference type="SMR" id="P9WN68"/>
<dbReference type="GeneID" id="45424915"/>
<dbReference type="KEGG" id="mtc:MT0972"/>
<dbReference type="PATRIC" id="fig|83331.31.peg.1043"/>
<dbReference type="HOGENOM" id="CLU_017947_3_1_11"/>
<dbReference type="UniPathway" id="UPA00109">
    <property type="reaction ID" value="UER00181"/>
</dbReference>
<dbReference type="UniPathway" id="UPA00138"/>
<dbReference type="Proteomes" id="UP000001020">
    <property type="component" value="Chromosome"/>
</dbReference>
<dbReference type="GO" id="GO:0005829">
    <property type="term" value="C:cytosol"/>
    <property type="evidence" value="ECO:0007669"/>
    <property type="project" value="TreeGrafter"/>
</dbReference>
<dbReference type="GO" id="GO:0097367">
    <property type="term" value="F:carbohydrate derivative binding"/>
    <property type="evidence" value="ECO:0007669"/>
    <property type="project" value="InterPro"/>
</dbReference>
<dbReference type="GO" id="GO:0004347">
    <property type="term" value="F:glucose-6-phosphate isomerase activity"/>
    <property type="evidence" value="ECO:0007669"/>
    <property type="project" value="UniProtKB-UniRule"/>
</dbReference>
<dbReference type="GO" id="GO:0048029">
    <property type="term" value="F:monosaccharide binding"/>
    <property type="evidence" value="ECO:0007669"/>
    <property type="project" value="TreeGrafter"/>
</dbReference>
<dbReference type="GO" id="GO:0006094">
    <property type="term" value="P:gluconeogenesis"/>
    <property type="evidence" value="ECO:0007669"/>
    <property type="project" value="UniProtKB-UniRule"/>
</dbReference>
<dbReference type="GO" id="GO:0051156">
    <property type="term" value="P:glucose 6-phosphate metabolic process"/>
    <property type="evidence" value="ECO:0007669"/>
    <property type="project" value="TreeGrafter"/>
</dbReference>
<dbReference type="GO" id="GO:0006096">
    <property type="term" value="P:glycolytic process"/>
    <property type="evidence" value="ECO:0007669"/>
    <property type="project" value="UniProtKB-UniRule"/>
</dbReference>
<dbReference type="CDD" id="cd05015">
    <property type="entry name" value="SIS_PGI_1"/>
    <property type="match status" value="1"/>
</dbReference>
<dbReference type="CDD" id="cd05016">
    <property type="entry name" value="SIS_PGI_2"/>
    <property type="match status" value="1"/>
</dbReference>
<dbReference type="FunFam" id="3.40.50.10490:FF:000018">
    <property type="entry name" value="Glucose-6-phosphate isomerase"/>
    <property type="match status" value="1"/>
</dbReference>
<dbReference type="Gene3D" id="1.10.1390.10">
    <property type="match status" value="1"/>
</dbReference>
<dbReference type="Gene3D" id="3.40.50.10490">
    <property type="entry name" value="Glucose-6-phosphate isomerase like protein, domain 1"/>
    <property type="match status" value="2"/>
</dbReference>
<dbReference type="HAMAP" id="MF_00473">
    <property type="entry name" value="G6P_isomerase"/>
    <property type="match status" value="1"/>
</dbReference>
<dbReference type="InterPro" id="IPR001672">
    <property type="entry name" value="G6P_Isomerase"/>
</dbReference>
<dbReference type="InterPro" id="IPR023096">
    <property type="entry name" value="G6P_Isomerase_C"/>
</dbReference>
<dbReference type="InterPro" id="IPR018189">
    <property type="entry name" value="Phosphoglucose_isomerase_CS"/>
</dbReference>
<dbReference type="InterPro" id="IPR046348">
    <property type="entry name" value="SIS_dom_sf"/>
</dbReference>
<dbReference type="InterPro" id="IPR035476">
    <property type="entry name" value="SIS_PGI_1"/>
</dbReference>
<dbReference type="InterPro" id="IPR035482">
    <property type="entry name" value="SIS_PGI_2"/>
</dbReference>
<dbReference type="NCBIfam" id="NF001211">
    <property type="entry name" value="PRK00179.1"/>
    <property type="match status" value="1"/>
</dbReference>
<dbReference type="PANTHER" id="PTHR11469">
    <property type="entry name" value="GLUCOSE-6-PHOSPHATE ISOMERASE"/>
    <property type="match status" value="1"/>
</dbReference>
<dbReference type="PANTHER" id="PTHR11469:SF1">
    <property type="entry name" value="GLUCOSE-6-PHOSPHATE ISOMERASE"/>
    <property type="match status" value="1"/>
</dbReference>
<dbReference type="Pfam" id="PF00342">
    <property type="entry name" value="PGI"/>
    <property type="match status" value="1"/>
</dbReference>
<dbReference type="PRINTS" id="PR00662">
    <property type="entry name" value="G6PISOMERASE"/>
</dbReference>
<dbReference type="SUPFAM" id="SSF53697">
    <property type="entry name" value="SIS domain"/>
    <property type="match status" value="1"/>
</dbReference>
<dbReference type="PROSITE" id="PS00765">
    <property type="entry name" value="P_GLUCOSE_ISOMERASE_1"/>
    <property type="match status" value="1"/>
</dbReference>
<dbReference type="PROSITE" id="PS00174">
    <property type="entry name" value="P_GLUCOSE_ISOMERASE_2"/>
    <property type="match status" value="1"/>
</dbReference>
<dbReference type="PROSITE" id="PS51463">
    <property type="entry name" value="P_GLUCOSE_ISOMERASE_3"/>
    <property type="match status" value="1"/>
</dbReference>
<protein>
    <recommendedName>
        <fullName evidence="1">Glucose-6-phosphate isomerase</fullName>
        <shortName evidence="1">GPI</shortName>
        <ecNumber evidence="1">5.3.1.9</ecNumber>
    </recommendedName>
    <alternativeName>
        <fullName evidence="1">Phosphoglucose isomerase</fullName>
        <shortName evidence="1">PGI</shortName>
    </alternativeName>
    <alternativeName>
        <fullName evidence="1">Phosphohexose isomerase</fullName>
        <shortName evidence="1">PHI</shortName>
    </alternativeName>
</protein>
<organism>
    <name type="scientific">Mycobacterium tuberculosis (strain CDC 1551 / Oshkosh)</name>
    <dbReference type="NCBI Taxonomy" id="83331"/>
    <lineage>
        <taxon>Bacteria</taxon>
        <taxon>Bacillati</taxon>
        <taxon>Actinomycetota</taxon>
        <taxon>Actinomycetes</taxon>
        <taxon>Mycobacteriales</taxon>
        <taxon>Mycobacteriaceae</taxon>
        <taxon>Mycobacterium</taxon>
        <taxon>Mycobacterium tuberculosis complex</taxon>
    </lineage>
</organism>
<comment type="function">
    <text evidence="1">Catalyzes the reversible isomerization of glucose-6-phosphate to fructose-6-phosphate.</text>
</comment>
<comment type="catalytic activity">
    <reaction evidence="1">
        <text>alpha-D-glucose 6-phosphate = beta-D-fructose 6-phosphate</text>
        <dbReference type="Rhea" id="RHEA:11816"/>
        <dbReference type="ChEBI" id="CHEBI:57634"/>
        <dbReference type="ChEBI" id="CHEBI:58225"/>
        <dbReference type="EC" id="5.3.1.9"/>
    </reaction>
</comment>
<comment type="pathway">
    <text evidence="1">Carbohydrate biosynthesis; gluconeogenesis.</text>
</comment>
<comment type="pathway">
    <text evidence="1">Carbohydrate degradation; glycolysis; D-glyceraldehyde 3-phosphate and glycerone phosphate from D-glucose: step 2/4.</text>
</comment>
<comment type="subcellular location">
    <subcellularLocation>
        <location evidence="1">Cytoplasm</location>
    </subcellularLocation>
</comment>
<comment type="similarity">
    <text evidence="1 3">Belongs to the GPI family.</text>
</comment>
<name>G6PI_MYCTO</name>
<reference key="1">
    <citation type="journal article" date="2002" name="J. Bacteriol.">
        <title>Whole-genome comparison of Mycobacterium tuberculosis clinical and laboratory strains.</title>
        <authorList>
            <person name="Fleischmann R.D."/>
            <person name="Alland D."/>
            <person name="Eisen J.A."/>
            <person name="Carpenter L."/>
            <person name="White O."/>
            <person name="Peterson J.D."/>
            <person name="DeBoy R.T."/>
            <person name="Dodson R.J."/>
            <person name="Gwinn M.L."/>
            <person name="Haft D.H."/>
            <person name="Hickey E.K."/>
            <person name="Kolonay J.F."/>
            <person name="Nelson W.C."/>
            <person name="Umayam L.A."/>
            <person name="Ermolaeva M.D."/>
            <person name="Salzberg S.L."/>
            <person name="Delcher A."/>
            <person name="Utterback T.R."/>
            <person name="Weidman J.F."/>
            <person name="Khouri H.M."/>
            <person name="Gill J."/>
            <person name="Mikula A."/>
            <person name="Bishai W."/>
            <person name="Jacobs W.R. Jr."/>
            <person name="Venter J.C."/>
            <person name="Fraser C.M."/>
        </authorList>
    </citation>
    <scope>NUCLEOTIDE SEQUENCE [LARGE SCALE GENOMIC DNA]</scope>
    <source>
        <strain>CDC 1551 / Oshkosh</strain>
    </source>
</reference>
<evidence type="ECO:0000255" key="1">
    <source>
        <dbReference type="HAMAP-Rule" id="MF_00473"/>
    </source>
</evidence>
<evidence type="ECO:0000256" key="2">
    <source>
        <dbReference type="SAM" id="MobiDB-lite"/>
    </source>
</evidence>
<evidence type="ECO:0000305" key="3"/>
<accession>P9WN68</accession>
<accession>L0T6W0</accession>
<accession>P64192</accession>
<accession>P77895</accession>
<keyword id="KW-0963">Cytoplasm</keyword>
<keyword id="KW-0312">Gluconeogenesis</keyword>
<keyword id="KW-0324">Glycolysis</keyword>
<keyword id="KW-0413">Isomerase</keyword>
<keyword id="KW-1185">Reference proteome</keyword>
<gene>
    <name evidence="1" type="primary">pgi</name>
    <name type="ordered locus">MT0972</name>
</gene>